<name>DAPB_STRT2</name>
<proteinExistence type="inferred from homology"/>
<evidence type="ECO:0000255" key="1">
    <source>
        <dbReference type="HAMAP-Rule" id="MF_00102"/>
    </source>
</evidence>
<evidence type="ECO:0000305" key="2"/>
<protein>
    <recommendedName>
        <fullName evidence="1">4-hydroxy-tetrahydrodipicolinate reductase</fullName>
        <shortName evidence="1">HTPA reductase</shortName>
        <ecNumber evidence="1">1.17.1.8</ecNumber>
    </recommendedName>
</protein>
<accession>Q5M5P2</accession>
<dbReference type="EC" id="1.17.1.8" evidence="1"/>
<dbReference type="EMBL" id="CP000023">
    <property type="protein sequence ID" value="AAV60138.1"/>
    <property type="molecule type" value="Genomic_DNA"/>
</dbReference>
<dbReference type="RefSeq" id="WP_004197279.1">
    <property type="nucleotide sequence ID" value="NC_006448.1"/>
</dbReference>
<dbReference type="SMR" id="Q5M5P2"/>
<dbReference type="STRING" id="264199.stu0424"/>
<dbReference type="GeneID" id="66898339"/>
<dbReference type="KEGG" id="stl:stu0424"/>
<dbReference type="eggNOG" id="COG0289">
    <property type="taxonomic scope" value="Bacteria"/>
</dbReference>
<dbReference type="HOGENOM" id="CLU_047479_0_1_9"/>
<dbReference type="UniPathway" id="UPA00034">
    <property type="reaction ID" value="UER00018"/>
</dbReference>
<dbReference type="Proteomes" id="UP000001170">
    <property type="component" value="Chromosome"/>
</dbReference>
<dbReference type="GO" id="GO:0005829">
    <property type="term" value="C:cytosol"/>
    <property type="evidence" value="ECO:0007669"/>
    <property type="project" value="TreeGrafter"/>
</dbReference>
<dbReference type="GO" id="GO:0008839">
    <property type="term" value="F:4-hydroxy-tetrahydrodipicolinate reductase"/>
    <property type="evidence" value="ECO:0007669"/>
    <property type="project" value="UniProtKB-EC"/>
</dbReference>
<dbReference type="GO" id="GO:0051287">
    <property type="term" value="F:NAD binding"/>
    <property type="evidence" value="ECO:0007669"/>
    <property type="project" value="UniProtKB-UniRule"/>
</dbReference>
<dbReference type="GO" id="GO:0050661">
    <property type="term" value="F:NADP binding"/>
    <property type="evidence" value="ECO:0007669"/>
    <property type="project" value="UniProtKB-UniRule"/>
</dbReference>
<dbReference type="GO" id="GO:0016726">
    <property type="term" value="F:oxidoreductase activity, acting on CH or CH2 groups, NAD or NADP as acceptor"/>
    <property type="evidence" value="ECO:0007669"/>
    <property type="project" value="UniProtKB-UniRule"/>
</dbReference>
<dbReference type="GO" id="GO:0019877">
    <property type="term" value="P:diaminopimelate biosynthetic process"/>
    <property type="evidence" value="ECO:0007669"/>
    <property type="project" value="UniProtKB-UniRule"/>
</dbReference>
<dbReference type="GO" id="GO:0009089">
    <property type="term" value="P:lysine biosynthetic process via diaminopimelate"/>
    <property type="evidence" value="ECO:0007669"/>
    <property type="project" value="UniProtKB-UniRule"/>
</dbReference>
<dbReference type="CDD" id="cd02274">
    <property type="entry name" value="DHDPR_N"/>
    <property type="match status" value="1"/>
</dbReference>
<dbReference type="FunFam" id="3.30.360.10:FF:000009">
    <property type="entry name" value="4-hydroxy-tetrahydrodipicolinate reductase"/>
    <property type="match status" value="1"/>
</dbReference>
<dbReference type="Gene3D" id="3.30.360.10">
    <property type="entry name" value="Dihydrodipicolinate Reductase, domain 2"/>
    <property type="match status" value="1"/>
</dbReference>
<dbReference type="Gene3D" id="3.40.50.720">
    <property type="entry name" value="NAD(P)-binding Rossmann-like Domain"/>
    <property type="match status" value="1"/>
</dbReference>
<dbReference type="HAMAP" id="MF_00102">
    <property type="entry name" value="DapB"/>
    <property type="match status" value="1"/>
</dbReference>
<dbReference type="InterPro" id="IPR022663">
    <property type="entry name" value="DapB_C"/>
</dbReference>
<dbReference type="InterPro" id="IPR000846">
    <property type="entry name" value="DapB_N"/>
</dbReference>
<dbReference type="InterPro" id="IPR022664">
    <property type="entry name" value="DapB_N_CS"/>
</dbReference>
<dbReference type="InterPro" id="IPR023940">
    <property type="entry name" value="DHDPR_bac"/>
</dbReference>
<dbReference type="InterPro" id="IPR036291">
    <property type="entry name" value="NAD(P)-bd_dom_sf"/>
</dbReference>
<dbReference type="NCBIfam" id="TIGR00036">
    <property type="entry name" value="dapB"/>
    <property type="match status" value="1"/>
</dbReference>
<dbReference type="PANTHER" id="PTHR20836:SF0">
    <property type="entry name" value="4-HYDROXY-TETRAHYDRODIPICOLINATE REDUCTASE 1, CHLOROPLASTIC-RELATED"/>
    <property type="match status" value="1"/>
</dbReference>
<dbReference type="PANTHER" id="PTHR20836">
    <property type="entry name" value="DIHYDRODIPICOLINATE REDUCTASE"/>
    <property type="match status" value="1"/>
</dbReference>
<dbReference type="Pfam" id="PF05173">
    <property type="entry name" value="DapB_C"/>
    <property type="match status" value="1"/>
</dbReference>
<dbReference type="Pfam" id="PF01113">
    <property type="entry name" value="DapB_N"/>
    <property type="match status" value="1"/>
</dbReference>
<dbReference type="PIRSF" id="PIRSF000161">
    <property type="entry name" value="DHPR"/>
    <property type="match status" value="1"/>
</dbReference>
<dbReference type="SUPFAM" id="SSF55347">
    <property type="entry name" value="Glyceraldehyde-3-phosphate dehydrogenase-like, C-terminal domain"/>
    <property type="match status" value="1"/>
</dbReference>
<dbReference type="SUPFAM" id="SSF51735">
    <property type="entry name" value="NAD(P)-binding Rossmann-fold domains"/>
    <property type="match status" value="1"/>
</dbReference>
<dbReference type="PROSITE" id="PS01298">
    <property type="entry name" value="DAPB"/>
    <property type="match status" value="1"/>
</dbReference>
<sequence>MSIKVIVAGFKGRMGSTAVEMVKGDDELTLAALLDPFAAEKEVDGVPVFTDKADLVGFDADVWVDFTIPAVAYENTRFALENGFAPVVGTTGFTEAQIQKLTDLSKDKSIGGLIAPNFAIGAILLMKFAAEASKYFPDLEIIELHHDKKKDAPSGTAVKTAELIREVRESKRQGAEDEMETLAGARGAEFDGFRIHSVRLPGLVAHQEVIFGAQGEGLTLRHDSYDRISFMSGVNLGIKEVVKRDQLVYGLEHLL</sequence>
<gene>
    <name evidence="1" type="primary">dapB</name>
    <name type="ordered locus">stu0424</name>
</gene>
<comment type="function">
    <text evidence="1">Catalyzes the conversion of 4-hydroxy-tetrahydrodipicolinate (HTPA) to tetrahydrodipicolinate.</text>
</comment>
<comment type="catalytic activity">
    <reaction evidence="1">
        <text>(S)-2,3,4,5-tetrahydrodipicolinate + NAD(+) + H2O = (2S,4S)-4-hydroxy-2,3,4,5-tetrahydrodipicolinate + NADH + H(+)</text>
        <dbReference type="Rhea" id="RHEA:35323"/>
        <dbReference type="ChEBI" id="CHEBI:15377"/>
        <dbReference type="ChEBI" id="CHEBI:15378"/>
        <dbReference type="ChEBI" id="CHEBI:16845"/>
        <dbReference type="ChEBI" id="CHEBI:57540"/>
        <dbReference type="ChEBI" id="CHEBI:57945"/>
        <dbReference type="ChEBI" id="CHEBI:67139"/>
        <dbReference type="EC" id="1.17.1.8"/>
    </reaction>
</comment>
<comment type="catalytic activity">
    <reaction evidence="1">
        <text>(S)-2,3,4,5-tetrahydrodipicolinate + NADP(+) + H2O = (2S,4S)-4-hydroxy-2,3,4,5-tetrahydrodipicolinate + NADPH + H(+)</text>
        <dbReference type="Rhea" id="RHEA:35331"/>
        <dbReference type="ChEBI" id="CHEBI:15377"/>
        <dbReference type="ChEBI" id="CHEBI:15378"/>
        <dbReference type="ChEBI" id="CHEBI:16845"/>
        <dbReference type="ChEBI" id="CHEBI:57783"/>
        <dbReference type="ChEBI" id="CHEBI:58349"/>
        <dbReference type="ChEBI" id="CHEBI:67139"/>
        <dbReference type="EC" id="1.17.1.8"/>
    </reaction>
</comment>
<comment type="pathway">
    <text evidence="1">Amino-acid biosynthesis; L-lysine biosynthesis via DAP pathway; (S)-tetrahydrodipicolinate from L-aspartate: step 4/4.</text>
</comment>
<comment type="subcellular location">
    <subcellularLocation>
        <location evidence="1">Cytoplasm</location>
    </subcellularLocation>
</comment>
<comment type="similarity">
    <text evidence="1">Belongs to the DapB family.</text>
</comment>
<comment type="caution">
    <text evidence="2">Was originally thought to be a dihydrodipicolinate reductase (DHDPR), catalyzing the conversion of dihydrodipicolinate to tetrahydrodipicolinate. However, it was shown in E.coli that the substrate of the enzymatic reaction is not dihydrodipicolinate (DHDP) but in fact (2S,4S)-4-hydroxy-2,3,4,5-tetrahydrodipicolinic acid (HTPA), the product released by the DapA-catalyzed reaction.</text>
</comment>
<keyword id="KW-0028">Amino-acid biosynthesis</keyword>
<keyword id="KW-0963">Cytoplasm</keyword>
<keyword id="KW-0220">Diaminopimelate biosynthesis</keyword>
<keyword id="KW-0457">Lysine biosynthesis</keyword>
<keyword id="KW-0520">NAD</keyword>
<keyword id="KW-0521">NADP</keyword>
<keyword id="KW-0560">Oxidoreductase</keyword>
<keyword id="KW-1185">Reference proteome</keyword>
<feature type="chain" id="PRO_0000228393" description="4-hydroxy-tetrahydrodipicolinate reductase">
    <location>
        <begin position="1"/>
        <end position="255"/>
    </location>
</feature>
<feature type="active site" description="Proton donor/acceptor" evidence="1">
    <location>
        <position position="145"/>
    </location>
</feature>
<feature type="active site" description="Proton donor" evidence="1">
    <location>
        <position position="149"/>
    </location>
</feature>
<feature type="binding site" evidence="1">
    <location>
        <begin position="9"/>
        <end position="14"/>
    </location>
    <ligand>
        <name>NAD(+)</name>
        <dbReference type="ChEBI" id="CHEBI:57540"/>
    </ligand>
</feature>
<feature type="binding site" evidence="1">
    <location>
        <begin position="89"/>
        <end position="91"/>
    </location>
    <ligand>
        <name>NAD(+)</name>
        <dbReference type="ChEBI" id="CHEBI:57540"/>
    </ligand>
</feature>
<feature type="binding site" evidence="1">
    <location>
        <begin position="115"/>
        <end position="118"/>
    </location>
    <ligand>
        <name>NAD(+)</name>
        <dbReference type="ChEBI" id="CHEBI:57540"/>
    </ligand>
</feature>
<feature type="binding site" evidence="1">
    <location>
        <position position="146"/>
    </location>
    <ligand>
        <name>(S)-2,3,4,5-tetrahydrodipicolinate</name>
        <dbReference type="ChEBI" id="CHEBI:16845"/>
    </ligand>
</feature>
<feature type="binding site" evidence="1">
    <location>
        <begin position="155"/>
        <end position="156"/>
    </location>
    <ligand>
        <name>(S)-2,3,4,5-tetrahydrodipicolinate</name>
        <dbReference type="ChEBI" id="CHEBI:16845"/>
    </ligand>
</feature>
<reference key="1">
    <citation type="journal article" date="2004" name="Nat. Biotechnol.">
        <title>Complete sequence and comparative genome analysis of the dairy bacterium Streptococcus thermophilus.</title>
        <authorList>
            <person name="Bolotin A."/>
            <person name="Quinquis B."/>
            <person name="Renault P."/>
            <person name="Sorokin A."/>
            <person name="Ehrlich S.D."/>
            <person name="Kulakauskas S."/>
            <person name="Lapidus A."/>
            <person name="Goltsman E."/>
            <person name="Mazur M."/>
            <person name="Pusch G.D."/>
            <person name="Fonstein M."/>
            <person name="Overbeek R."/>
            <person name="Kyprides N."/>
            <person name="Purnelle B."/>
            <person name="Prozzi D."/>
            <person name="Ngui K."/>
            <person name="Masuy D."/>
            <person name="Hancy F."/>
            <person name="Burteau S."/>
            <person name="Boutry M."/>
            <person name="Delcour J."/>
            <person name="Goffeau A."/>
            <person name="Hols P."/>
        </authorList>
    </citation>
    <scope>NUCLEOTIDE SEQUENCE [LARGE SCALE GENOMIC DNA]</scope>
    <source>
        <strain>ATCC BAA-250 / LMG 18311</strain>
    </source>
</reference>
<organism>
    <name type="scientific">Streptococcus thermophilus (strain ATCC BAA-250 / LMG 18311)</name>
    <dbReference type="NCBI Taxonomy" id="264199"/>
    <lineage>
        <taxon>Bacteria</taxon>
        <taxon>Bacillati</taxon>
        <taxon>Bacillota</taxon>
        <taxon>Bacilli</taxon>
        <taxon>Lactobacillales</taxon>
        <taxon>Streptococcaceae</taxon>
        <taxon>Streptococcus</taxon>
    </lineage>
</organism>